<reference key="1">
    <citation type="submission" date="2008-02" db="EMBL/GenBank/DDBJ databases">
        <title>Complete sequence of chromosome of Methylobacterium sp. 4-46.</title>
        <authorList>
            <consortium name="US DOE Joint Genome Institute"/>
            <person name="Copeland A."/>
            <person name="Lucas S."/>
            <person name="Lapidus A."/>
            <person name="Glavina del Rio T."/>
            <person name="Dalin E."/>
            <person name="Tice H."/>
            <person name="Bruce D."/>
            <person name="Goodwin L."/>
            <person name="Pitluck S."/>
            <person name="Chertkov O."/>
            <person name="Brettin T."/>
            <person name="Detter J.C."/>
            <person name="Han C."/>
            <person name="Kuske C.R."/>
            <person name="Schmutz J."/>
            <person name="Larimer F."/>
            <person name="Land M."/>
            <person name="Hauser L."/>
            <person name="Kyrpides N."/>
            <person name="Ivanova N."/>
            <person name="Marx C.J."/>
            <person name="Richardson P."/>
        </authorList>
    </citation>
    <scope>NUCLEOTIDE SEQUENCE [LARGE SCALE GENOMIC DNA]</scope>
    <source>
        <strain>4-46</strain>
    </source>
</reference>
<evidence type="ECO:0000255" key="1">
    <source>
        <dbReference type="HAMAP-Rule" id="MF_00175"/>
    </source>
</evidence>
<evidence type="ECO:0000255" key="2">
    <source>
        <dbReference type="PROSITE-ProRule" id="PRU01250"/>
    </source>
</evidence>
<gene>
    <name evidence="1" type="primary">clpX</name>
    <name type="ordered locus">M446_6584</name>
</gene>
<keyword id="KW-0067">ATP-binding</keyword>
<keyword id="KW-0143">Chaperone</keyword>
<keyword id="KW-0479">Metal-binding</keyword>
<keyword id="KW-0547">Nucleotide-binding</keyword>
<keyword id="KW-0862">Zinc</keyword>
<proteinExistence type="inferred from homology"/>
<feature type="chain" id="PRO_1000097970" description="ATP-dependent Clp protease ATP-binding subunit ClpX">
    <location>
        <begin position="1"/>
        <end position="423"/>
    </location>
</feature>
<feature type="domain" description="ClpX-type ZB" evidence="2">
    <location>
        <begin position="3"/>
        <end position="56"/>
    </location>
</feature>
<feature type="binding site" evidence="2">
    <location>
        <position position="15"/>
    </location>
    <ligand>
        <name>Zn(2+)</name>
        <dbReference type="ChEBI" id="CHEBI:29105"/>
    </ligand>
</feature>
<feature type="binding site" evidence="2">
    <location>
        <position position="18"/>
    </location>
    <ligand>
        <name>Zn(2+)</name>
        <dbReference type="ChEBI" id="CHEBI:29105"/>
    </ligand>
</feature>
<feature type="binding site" evidence="2">
    <location>
        <position position="37"/>
    </location>
    <ligand>
        <name>Zn(2+)</name>
        <dbReference type="ChEBI" id="CHEBI:29105"/>
    </ligand>
</feature>
<feature type="binding site" evidence="2">
    <location>
        <position position="40"/>
    </location>
    <ligand>
        <name>Zn(2+)</name>
        <dbReference type="ChEBI" id="CHEBI:29105"/>
    </ligand>
</feature>
<feature type="binding site" evidence="1">
    <location>
        <begin position="119"/>
        <end position="126"/>
    </location>
    <ligand>
        <name>ATP</name>
        <dbReference type="ChEBI" id="CHEBI:30616"/>
    </ligand>
</feature>
<comment type="function">
    <text evidence="1">ATP-dependent specificity component of the Clp protease. It directs the protease to specific substrates. Can perform chaperone functions in the absence of ClpP.</text>
</comment>
<comment type="subunit">
    <text evidence="1">Component of the ClpX-ClpP complex. Forms a hexameric ring that, in the presence of ATP, binds to fourteen ClpP subunits assembled into a disk-like structure with a central cavity, resembling the structure of eukaryotic proteasomes.</text>
</comment>
<comment type="similarity">
    <text evidence="1">Belongs to the ClpX chaperone family.</text>
</comment>
<dbReference type="EMBL" id="CP000943">
    <property type="protein sequence ID" value="ACA20840.1"/>
    <property type="molecule type" value="Genomic_DNA"/>
</dbReference>
<dbReference type="RefSeq" id="WP_012336216.1">
    <property type="nucleotide sequence ID" value="NC_010511.1"/>
</dbReference>
<dbReference type="SMR" id="B0UD19"/>
<dbReference type="STRING" id="426117.M446_6584"/>
<dbReference type="KEGG" id="met:M446_6584"/>
<dbReference type="eggNOG" id="COG1219">
    <property type="taxonomic scope" value="Bacteria"/>
</dbReference>
<dbReference type="HOGENOM" id="CLU_014218_8_2_5"/>
<dbReference type="GO" id="GO:0009376">
    <property type="term" value="C:HslUV protease complex"/>
    <property type="evidence" value="ECO:0007669"/>
    <property type="project" value="TreeGrafter"/>
</dbReference>
<dbReference type="GO" id="GO:0005524">
    <property type="term" value="F:ATP binding"/>
    <property type="evidence" value="ECO:0007669"/>
    <property type="project" value="UniProtKB-UniRule"/>
</dbReference>
<dbReference type="GO" id="GO:0016887">
    <property type="term" value="F:ATP hydrolysis activity"/>
    <property type="evidence" value="ECO:0007669"/>
    <property type="project" value="InterPro"/>
</dbReference>
<dbReference type="GO" id="GO:0140662">
    <property type="term" value="F:ATP-dependent protein folding chaperone"/>
    <property type="evidence" value="ECO:0007669"/>
    <property type="project" value="InterPro"/>
</dbReference>
<dbReference type="GO" id="GO:0046983">
    <property type="term" value="F:protein dimerization activity"/>
    <property type="evidence" value="ECO:0007669"/>
    <property type="project" value="InterPro"/>
</dbReference>
<dbReference type="GO" id="GO:0051082">
    <property type="term" value="F:unfolded protein binding"/>
    <property type="evidence" value="ECO:0007669"/>
    <property type="project" value="UniProtKB-UniRule"/>
</dbReference>
<dbReference type="GO" id="GO:0008270">
    <property type="term" value="F:zinc ion binding"/>
    <property type="evidence" value="ECO:0007669"/>
    <property type="project" value="InterPro"/>
</dbReference>
<dbReference type="GO" id="GO:0051301">
    <property type="term" value="P:cell division"/>
    <property type="evidence" value="ECO:0007669"/>
    <property type="project" value="TreeGrafter"/>
</dbReference>
<dbReference type="GO" id="GO:0051603">
    <property type="term" value="P:proteolysis involved in protein catabolic process"/>
    <property type="evidence" value="ECO:0007669"/>
    <property type="project" value="TreeGrafter"/>
</dbReference>
<dbReference type="CDD" id="cd19497">
    <property type="entry name" value="RecA-like_ClpX"/>
    <property type="match status" value="1"/>
</dbReference>
<dbReference type="FunFam" id="1.10.8.60:FF:000002">
    <property type="entry name" value="ATP-dependent Clp protease ATP-binding subunit ClpX"/>
    <property type="match status" value="1"/>
</dbReference>
<dbReference type="FunFam" id="3.40.50.300:FF:000005">
    <property type="entry name" value="ATP-dependent Clp protease ATP-binding subunit ClpX"/>
    <property type="match status" value="1"/>
</dbReference>
<dbReference type="Gene3D" id="1.10.8.60">
    <property type="match status" value="1"/>
</dbReference>
<dbReference type="Gene3D" id="6.20.220.10">
    <property type="entry name" value="ClpX chaperone, C4-type zinc finger domain"/>
    <property type="match status" value="1"/>
</dbReference>
<dbReference type="Gene3D" id="3.40.50.300">
    <property type="entry name" value="P-loop containing nucleotide triphosphate hydrolases"/>
    <property type="match status" value="1"/>
</dbReference>
<dbReference type="HAMAP" id="MF_00175">
    <property type="entry name" value="ClpX"/>
    <property type="match status" value="1"/>
</dbReference>
<dbReference type="InterPro" id="IPR003593">
    <property type="entry name" value="AAA+_ATPase"/>
</dbReference>
<dbReference type="InterPro" id="IPR050052">
    <property type="entry name" value="ATP-dep_Clp_protease_ClpX"/>
</dbReference>
<dbReference type="InterPro" id="IPR003959">
    <property type="entry name" value="ATPase_AAA_core"/>
</dbReference>
<dbReference type="InterPro" id="IPR019489">
    <property type="entry name" value="Clp_ATPase_C"/>
</dbReference>
<dbReference type="InterPro" id="IPR004487">
    <property type="entry name" value="Clp_protease_ATP-bd_su_ClpX"/>
</dbReference>
<dbReference type="InterPro" id="IPR046425">
    <property type="entry name" value="ClpX_bact"/>
</dbReference>
<dbReference type="InterPro" id="IPR027417">
    <property type="entry name" value="P-loop_NTPase"/>
</dbReference>
<dbReference type="InterPro" id="IPR010603">
    <property type="entry name" value="Znf_CppX_C4"/>
</dbReference>
<dbReference type="InterPro" id="IPR038366">
    <property type="entry name" value="Znf_CppX_C4_sf"/>
</dbReference>
<dbReference type="NCBIfam" id="TIGR00382">
    <property type="entry name" value="clpX"/>
    <property type="match status" value="1"/>
</dbReference>
<dbReference type="NCBIfam" id="NF003745">
    <property type="entry name" value="PRK05342.1"/>
    <property type="match status" value="1"/>
</dbReference>
<dbReference type="PANTHER" id="PTHR48102:SF7">
    <property type="entry name" value="ATP-DEPENDENT CLP PROTEASE ATP-BINDING SUBUNIT CLPX-LIKE, MITOCHONDRIAL"/>
    <property type="match status" value="1"/>
</dbReference>
<dbReference type="PANTHER" id="PTHR48102">
    <property type="entry name" value="ATP-DEPENDENT CLP PROTEASE ATP-BINDING SUBUNIT CLPX-LIKE, MITOCHONDRIAL-RELATED"/>
    <property type="match status" value="1"/>
</dbReference>
<dbReference type="Pfam" id="PF07724">
    <property type="entry name" value="AAA_2"/>
    <property type="match status" value="1"/>
</dbReference>
<dbReference type="Pfam" id="PF10431">
    <property type="entry name" value="ClpB_D2-small"/>
    <property type="match status" value="1"/>
</dbReference>
<dbReference type="Pfam" id="PF06689">
    <property type="entry name" value="zf-C4_ClpX"/>
    <property type="match status" value="1"/>
</dbReference>
<dbReference type="SMART" id="SM00382">
    <property type="entry name" value="AAA"/>
    <property type="match status" value="1"/>
</dbReference>
<dbReference type="SMART" id="SM01086">
    <property type="entry name" value="ClpB_D2-small"/>
    <property type="match status" value="1"/>
</dbReference>
<dbReference type="SMART" id="SM00994">
    <property type="entry name" value="zf-C4_ClpX"/>
    <property type="match status" value="1"/>
</dbReference>
<dbReference type="SUPFAM" id="SSF57716">
    <property type="entry name" value="Glucocorticoid receptor-like (DNA-binding domain)"/>
    <property type="match status" value="1"/>
</dbReference>
<dbReference type="SUPFAM" id="SSF52540">
    <property type="entry name" value="P-loop containing nucleoside triphosphate hydrolases"/>
    <property type="match status" value="1"/>
</dbReference>
<dbReference type="PROSITE" id="PS51902">
    <property type="entry name" value="CLPX_ZB"/>
    <property type="match status" value="1"/>
</dbReference>
<name>CLPX_METS4</name>
<accession>B0UD19</accession>
<sequence length="423" mass="46340">MSKAGGNDSKSTLYCSFCGKSQHEVRKLIAGPTVFICDECVELCMDIIREESKSSLVKSRDGVPTPKEIRRVLDDYVIGQDFAKKVLSVAVHNHYKRLAHAAKHNDVELAKSNILLIGPTGSGKTLLAQTLARILDVPFTMADATTLTEAGYVGEDVENIILKLLQASDYNVERAQRGIVYIDEIDKISRKSDNPSITRDVSGEGVQQALLKIMEGTVASVPPQGGRKHPQQEFLQVDTTNILFICGGAFAGLERIISARGKGTSIGFGATVQAPDDRRTGEIFRAVEPEDLLKFGLIPEFVGRLPVLATLEDLDETALKRILQEPKNALVKQYQRLFEMENVDLTFQEEALTLVARKAIERKTGARGLRSILESILLETMYDLPGLDSVEQVVIGPEVVEGKARPLYIHGDRAKDAPASVSA</sequence>
<protein>
    <recommendedName>
        <fullName evidence="1">ATP-dependent Clp protease ATP-binding subunit ClpX</fullName>
    </recommendedName>
</protein>
<organism>
    <name type="scientific">Methylobacterium sp. (strain 4-46)</name>
    <dbReference type="NCBI Taxonomy" id="426117"/>
    <lineage>
        <taxon>Bacteria</taxon>
        <taxon>Pseudomonadati</taxon>
        <taxon>Pseudomonadota</taxon>
        <taxon>Alphaproteobacteria</taxon>
        <taxon>Hyphomicrobiales</taxon>
        <taxon>Methylobacteriaceae</taxon>
        <taxon>Methylobacterium</taxon>
    </lineage>
</organism>